<organism>
    <name type="scientific">Mus musculus</name>
    <name type="common">Mouse</name>
    <dbReference type="NCBI Taxonomy" id="10090"/>
    <lineage>
        <taxon>Eukaryota</taxon>
        <taxon>Metazoa</taxon>
        <taxon>Chordata</taxon>
        <taxon>Craniata</taxon>
        <taxon>Vertebrata</taxon>
        <taxon>Euteleostomi</taxon>
        <taxon>Mammalia</taxon>
        <taxon>Eutheria</taxon>
        <taxon>Euarchontoglires</taxon>
        <taxon>Glires</taxon>
        <taxon>Rodentia</taxon>
        <taxon>Myomorpha</taxon>
        <taxon>Muroidea</taxon>
        <taxon>Muridae</taxon>
        <taxon>Murinae</taxon>
        <taxon>Mus</taxon>
        <taxon>Mus</taxon>
    </lineage>
</organism>
<keyword id="KW-0106">Calcium</keyword>
<keyword id="KW-1003">Cell membrane</keyword>
<keyword id="KW-0186">Copper</keyword>
<keyword id="KW-1015">Disulfide bond</keyword>
<keyword id="KW-0325">Glycoprotein</keyword>
<keyword id="KW-0358">Heparin-binding</keyword>
<keyword id="KW-0472">Membrane</keyword>
<keyword id="KW-0479">Metal-binding</keyword>
<keyword id="KW-0560">Oxidoreductase</keyword>
<keyword id="KW-1185">Reference proteome</keyword>
<keyword id="KW-0964">Secreted</keyword>
<keyword id="KW-0732">Signal</keyword>
<keyword id="KW-0801">TPQ</keyword>
<dbReference type="EC" id="1.4.3.22" evidence="3"/>
<dbReference type="EMBL" id="BC021880">
    <property type="protein sequence ID" value="AAH21880.1"/>
    <property type="molecule type" value="mRNA"/>
</dbReference>
<dbReference type="EMBL" id="BC022627">
    <property type="protein sequence ID" value="AAH22627.1"/>
    <property type="molecule type" value="mRNA"/>
</dbReference>
<dbReference type="EMBL" id="BC034215">
    <property type="protein sequence ID" value="AAH34215.1"/>
    <property type="molecule type" value="mRNA"/>
</dbReference>
<dbReference type="SMR" id="Q8JZQ5"/>
<dbReference type="FunCoup" id="Q8JZQ5">
    <property type="interactions" value="6"/>
</dbReference>
<dbReference type="STRING" id="10090.ENSMUSP00000124085"/>
<dbReference type="GlyCosmos" id="Q8JZQ5">
    <property type="glycosylation" value="4 sites, No reported glycans"/>
</dbReference>
<dbReference type="GlyGen" id="Q8JZQ5">
    <property type="glycosylation" value="6 sites"/>
</dbReference>
<dbReference type="iPTMnet" id="Q8JZQ5"/>
<dbReference type="PhosphoSitePlus" id="Q8JZQ5"/>
<dbReference type="jPOST" id="Q8JZQ5"/>
<dbReference type="PaxDb" id="10090-ENSMUSP00000124085"/>
<dbReference type="ProteomicsDB" id="281778"/>
<dbReference type="AGR" id="MGI:1923757"/>
<dbReference type="MGI" id="MGI:1923757">
    <property type="gene designation" value="Aoc1"/>
</dbReference>
<dbReference type="eggNOG" id="KOG1186">
    <property type="taxonomic scope" value="Eukaryota"/>
</dbReference>
<dbReference type="InParanoid" id="Q8JZQ5"/>
<dbReference type="Reactome" id="R-MMU-211945">
    <property type="pathway name" value="Phase I - Functionalization of compounds"/>
</dbReference>
<dbReference type="Reactome" id="R-MMU-6798695">
    <property type="pathway name" value="Neutrophil degranulation"/>
</dbReference>
<dbReference type="ChiTaRS" id="Aoc1">
    <property type="organism name" value="mouse"/>
</dbReference>
<dbReference type="PRO" id="PR:Q8JZQ5"/>
<dbReference type="Proteomes" id="UP000000589">
    <property type="component" value="Unplaced"/>
</dbReference>
<dbReference type="RNAct" id="Q8JZQ5">
    <property type="molecule type" value="protein"/>
</dbReference>
<dbReference type="GO" id="GO:0005923">
    <property type="term" value="C:bicellular tight junction"/>
    <property type="evidence" value="ECO:0000250"/>
    <property type="project" value="UniProtKB"/>
</dbReference>
<dbReference type="GO" id="GO:0005615">
    <property type="term" value="C:extracellular space"/>
    <property type="evidence" value="ECO:0000250"/>
    <property type="project" value="UniProtKB"/>
</dbReference>
<dbReference type="GO" id="GO:0005886">
    <property type="term" value="C:plasma membrane"/>
    <property type="evidence" value="ECO:0000250"/>
    <property type="project" value="UniProtKB"/>
</dbReference>
<dbReference type="GO" id="GO:0005507">
    <property type="term" value="F:copper ion binding"/>
    <property type="evidence" value="ECO:0000250"/>
    <property type="project" value="UniProtKB"/>
</dbReference>
<dbReference type="GO" id="GO:0052597">
    <property type="term" value="F:diamine oxidase activity"/>
    <property type="evidence" value="ECO:0000250"/>
    <property type="project" value="UniProtKB"/>
</dbReference>
<dbReference type="GO" id="GO:0008201">
    <property type="term" value="F:heparin binding"/>
    <property type="evidence" value="ECO:0000250"/>
    <property type="project" value="UniProtKB"/>
</dbReference>
<dbReference type="GO" id="GO:0052598">
    <property type="term" value="F:histamine oxidase activity"/>
    <property type="evidence" value="ECO:0000250"/>
    <property type="project" value="UniProtKB"/>
</dbReference>
<dbReference type="GO" id="GO:0008131">
    <property type="term" value="F:primary methylamine oxidase activity"/>
    <property type="evidence" value="ECO:0000266"/>
    <property type="project" value="MGI"/>
</dbReference>
<dbReference type="GO" id="GO:0050232">
    <property type="term" value="F:putrescine oxidase activity"/>
    <property type="evidence" value="ECO:0000250"/>
    <property type="project" value="UniProtKB"/>
</dbReference>
<dbReference type="GO" id="GO:0048038">
    <property type="term" value="F:quinone binding"/>
    <property type="evidence" value="ECO:0007669"/>
    <property type="project" value="InterPro"/>
</dbReference>
<dbReference type="GO" id="GO:0009445">
    <property type="term" value="P:putrescine metabolic process"/>
    <property type="evidence" value="ECO:0000250"/>
    <property type="project" value="UniProtKB"/>
</dbReference>
<dbReference type="FunFam" id="2.70.98.20:FF:000002">
    <property type="entry name" value="Amine oxidase"/>
    <property type="match status" value="1"/>
</dbReference>
<dbReference type="FunFam" id="3.10.450.40:FF:000007">
    <property type="entry name" value="Amine oxidase"/>
    <property type="match status" value="1"/>
</dbReference>
<dbReference type="FunFam" id="3.10.450.40:FF:000009">
    <property type="entry name" value="Amine oxidase"/>
    <property type="match status" value="1"/>
</dbReference>
<dbReference type="Gene3D" id="3.10.450.40">
    <property type="match status" value="2"/>
</dbReference>
<dbReference type="Gene3D" id="2.70.98.20">
    <property type="entry name" value="Copper amine oxidase, catalytic domain"/>
    <property type="match status" value="1"/>
</dbReference>
<dbReference type="InterPro" id="IPR049947">
    <property type="entry name" value="Cu_Am_Ox_Cu-bd"/>
</dbReference>
<dbReference type="InterPro" id="IPR049948">
    <property type="entry name" value="Cu_Am_ox_TPQ-bd"/>
</dbReference>
<dbReference type="InterPro" id="IPR000269">
    <property type="entry name" value="Cu_amine_oxidase"/>
</dbReference>
<dbReference type="InterPro" id="IPR015798">
    <property type="entry name" value="Cu_amine_oxidase_C"/>
</dbReference>
<dbReference type="InterPro" id="IPR036460">
    <property type="entry name" value="Cu_amine_oxidase_C_sf"/>
</dbReference>
<dbReference type="InterPro" id="IPR016182">
    <property type="entry name" value="Cu_amine_oxidase_N-reg"/>
</dbReference>
<dbReference type="InterPro" id="IPR015800">
    <property type="entry name" value="Cu_amine_oxidase_N2"/>
</dbReference>
<dbReference type="InterPro" id="IPR015802">
    <property type="entry name" value="Cu_amine_oxidase_N3"/>
</dbReference>
<dbReference type="PANTHER" id="PTHR10638:SF3">
    <property type="entry name" value="AMILORIDE-SENSITIVE AMINE OXIDASE [COPPER-CONTAINING]"/>
    <property type="match status" value="1"/>
</dbReference>
<dbReference type="PANTHER" id="PTHR10638">
    <property type="entry name" value="COPPER AMINE OXIDASE"/>
    <property type="match status" value="1"/>
</dbReference>
<dbReference type="Pfam" id="PF01179">
    <property type="entry name" value="Cu_amine_oxid"/>
    <property type="match status" value="1"/>
</dbReference>
<dbReference type="Pfam" id="PF02727">
    <property type="entry name" value="Cu_amine_oxidN2"/>
    <property type="match status" value="1"/>
</dbReference>
<dbReference type="Pfam" id="PF02728">
    <property type="entry name" value="Cu_amine_oxidN3"/>
    <property type="match status" value="1"/>
</dbReference>
<dbReference type="PRINTS" id="PR00766">
    <property type="entry name" value="CUDAOXIDASE"/>
</dbReference>
<dbReference type="SUPFAM" id="SSF49998">
    <property type="entry name" value="Amine oxidase catalytic domain"/>
    <property type="match status" value="1"/>
</dbReference>
<dbReference type="SUPFAM" id="SSF54416">
    <property type="entry name" value="Amine oxidase N-terminal region"/>
    <property type="match status" value="2"/>
</dbReference>
<dbReference type="PROSITE" id="PS01164">
    <property type="entry name" value="COPPER_AMINE_OXID_1"/>
    <property type="match status" value="1"/>
</dbReference>
<dbReference type="PROSITE" id="PS01165">
    <property type="entry name" value="COPPER_AMINE_OXID_2"/>
    <property type="match status" value="1"/>
</dbReference>
<protein>
    <recommendedName>
        <fullName evidence="3">Diamine oxidase [copper-containing]</fullName>
        <shortName evidence="3">Diamine oxidase</shortName>
        <ecNumber evidence="3">1.4.3.22</ecNumber>
    </recommendedName>
    <alternativeName>
        <fullName evidence="7">Amine oxidase copper domain-containing protein 1</fullName>
    </alternativeName>
    <alternativeName>
        <fullName evidence="3">Histaminase</fullName>
    </alternativeName>
</protein>
<sequence>MSLAFGWAAVILLLQTADTASAVTTPHDKARIFADLSPQEIKAVHSFLMSRKELGLESSKNLTLAKNSVFLIEMLLPKKKNVLKFLDEGRKSPVREARAIIFFGAQDHPNVTEFAVGPLPRPCYVQALSPRPGHHLSWSSRPISTAEYDLLYHMLNRAITPLHQFFLDTTGFSFLGCDDRFLTFTDVAPRGVESGQRRSWLIVQRYVEGYFLHPTGLEILVDHSSTDVQDWRVEQLWYNGKFYNSPEELAQKYAVGEVEAVVLEEVVLEDPLPGATEQPPLFSSYKPRGEFHTPVTVAGPHVVQPSGPRYKLEGNVVLYGDWSFSYRLRSSSGLQIFNVLFGGERVAYEVSVQEAVALYGGHTPAGMQTKYIDVGWGLGSVTHELAPGIDCPETATFLDAFHYYDSDGPVLYPRALCLFEMPTGVPLRRHFDSNFKGGFNFYAGLKGYVLVLRTTSTVYNYDYIWDFIFYPNGVMETKMHATGYVHATFYTPEGLRHGTRLQTHLLGNIHTHLVHYRVDLDVAGTKNSFRTLKTKLENITNPWSPSHSLVQPTLEQTQYSHEHQAAFRFGQTLPKYLLFSSPQKNRWGHRRSYRLQIHSMAEQVLPPGWQEERAVTWARYPLAVTKYRESERYSSSLYNQNDPWDPPVVFEEFLRNNENIENEDLVAWVTVGFLHIPHSEDVPNTATPGNCVGFLIRPFNFFEEDPSLASRDTVIVWPQDNGLNHVQRWIPENRDCLVSPPFSYNGTYKPV</sequence>
<name>AOC1_MOUSE</name>
<evidence type="ECO:0000250" key="1"/>
<evidence type="ECO:0000250" key="2">
    <source>
        <dbReference type="UniProtKB" id="P12807"/>
    </source>
</evidence>
<evidence type="ECO:0000250" key="3">
    <source>
        <dbReference type="UniProtKB" id="P19801"/>
    </source>
</evidence>
<evidence type="ECO:0000255" key="4"/>
<evidence type="ECO:0000255" key="5">
    <source>
        <dbReference type="PROSITE-ProRule" id="PRU00498"/>
    </source>
</evidence>
<evidence type="ECO:0000305" key="6"/>
<evidence type="ECO:0000312" key="7">
    <source>
        <dbReference type="MGI" id="MGI:1923757"/>
    </source>
</evidence>
<reference key="1">
    <citation type="journal article" date="2004" name="Genome Res.">
        <title>The status, quality, and expansion of the NIH full-length cDNA project: the Mammalian Gene Collection (MGC).</title>
        <authorList>
            <consortium name="The MGC Project Team"/>
        </authorList>
    </citation>
    <scope>NUCLEOTIDE SEQUENCE [LARGE SCALE MRNA]</scope>
    <source>
        <tissue>Colon</tissue>
    </source>
</reference>
<feature type="signal peptide" evidence="4">
    <location>
        <begin position="1"/>
        <end position="22"/>
    </location>
</feature>
<feature type="chain" id="PRO_0000035667" description="Diamine oxidase [copper-containing]" evidence="1">
    <location>
        <begin position="23"/>
        <end position="751"/>
    </location>
</feature>
<feature type="active site" description="Proton acceptor" evidence="3">
    <location>
        <position position="373"/>
    </location>
</feature>
<feature type="active site" description="Schiff-base intermediate with substrate; via topaquinone" evidence="3">
    <location>
        <position position="461"/>
    </location>
</feature>
<feature type="binding site" evidence="3">
    <location>
        <position position="510"/>
    </location>
    <ligand>
        <name>Cu(2+)</name>
        <dbReference type="ChEBI" id="CHEBI:29036"/>
    </ligand>
</feature>
<feature type="binding site" evidence="3">
    <location>
        <position position="512"/>
    </location>
    <ligand>
        <name>Cu(2+)</name>
        <dbReference type="ChEBI" id="CHEBI:29036"/>
    </ligand>
</feature>
<feature type="binding site" evidence="3">
    <location>
        <position position="519"/>
    </location>
    <ligand>
        <name>Ca(2+)</name>
        <dbReference type="ChEBI" id="CHEBI:29108"/>
        <label>1</label>
    </ligand>
</feature>
<feature type="binding site" evidence="3">
    <location>
        <position position="520"/>
    </location>
    <ligand>
        <name>Ca(2+)</name>
        <dbReference type="ChEBI" id="CHEBI:29108"/>
        <label>1</label>
    </ligand>
</feature>
<feature type="binding site" evidence="3">
    <location>
        <position position="521"/>
    </location>
    <ligand>
        <name>Ca(2+)</name>
        <dbReference type="ChEBI" id="CHEBI:29108"/>
        <label>1</label>
    </ligand>
</feature>
<feature type="binding site" evidence="3">
    <location>
        <position position="562"/>
    </location>
    <ligand>
        <name>Ca(2+)</name>
        <dbReference type="ChEBI" id="CHEBI:29108"/>
        <label>2</label>
    </ligand>
</feature>
<feature type="binding site" evidence="3">
    <location>
        <position position="653"/>
    </location>
    <ligand>
        <name>Ca(2+)</name>
        <dbReference type="ChEBI" id="CHEBI:29108"/>
        <label>2</label>
    </ligand>
</feature>
<feature type="binding site" evidence="3">
    <location>
        <position position="656"/>
    </location>
    <ligand>
        <name>Ca(2+)</name>
        <dbReference type="ChEBI" id="CHEBI:29108"/>
        <label>2</label>
    </ligand>
</feature>
<feature type="binding site" evidence="3">
    <location>
        <position position="658"/>
    </location>
    <ligand>
        <name>Ca(2+)</name>
        <dbReference type="ChEBI" id="CHEBI:29108"/>
        <label>2</label>
    </ligand>
</feature>
<feature type="binding site" evidence="3">
    <location>
        <position position="664"/>
    </location>
    <ligand>
        <name>Ca(2+)</name>
        <dbReference type="ChEBI" id="CHEBI:29108"/>
        <label>1</label>
    </ligand>
</feature>
<feature type="binding site" evidence="3">
    <location>
        <position position="665"/>
    </location>
    <ligand>
        <name>Ca(2+)</name>
        <dbReference type="ChEBI" id="CHEBI:29108"/>
        <label>1</label>
    </ligand>
</feature>
<feature type="binding site" evidence="3">
    <location>
        <position position="675"/>
    </location>
    <ligand>
        <name>Cu(2+)</name>
        <dbReference type="ChEBI" id="CHEBI:29036"/>
    </ligand>
</feature>
<feature type="modified residue" description="2',4',5'-topaquinone" evidence="2">
    <location>
        <position position="461"/>
    </location>
</feature>
<feature type="glycosylation site" description="N-linked (GlcNAc...) asparagine" evidence="5">
    <location>
        <position position="61"/>
    </location>
</feature>
<feature type="glycosylation site" description="N-linked (GlcNAc...) asparagine" evidence="3">
    <location>
        <position position="110"/>
    </location>
</feature>
<feature type="glycosylation site" description="N-linked (GlcNAc...) asparagine" evidence="3">
    <location>
        <position position="538"/>
    </location>
</feature>
<feature type="glycosylation site" description="N-linked (GlcNAc...) asparagine" evidence="3">
    <location>
        <position position="745"/>
    </location>
</feature>
<feature type="disulfide bond" evidence="3">
    <location>
        <begin position="391"/>
        <end position="417"/>
    </location>
</feature>
<feature type="disulfide bond" description="Interchain" evidence="3">
    <location>
        <position position="736"/>
    </location>
</feature>
<feature type="sequence conflict" description="In Ref. 1; AAH21880." evidence="6" ref="1">
    <original>A</original>
    <variation>P</variation>
    <location>
        <position position="20"/>
    </location>
</feature>
<proteinExistence type="evidence at transcript level"/>
<accession>Q8JZQ5</accession>
<accession>Q8R229</accession>
<accession>Q8VC36</accession>
<comment type="function">
    <text evidence="3">Catalyzes the oxidative deamination of primary amines to the corresponding aldehydes with the concomitant production of hydrogen peroxide and ammonia. Its preferred substrates in vitro are the diamines histamine and 1-methylhistamine and it could therefore play a role in allergic and immune responses. Has a broad specificity for diamines and can also act on cadaverine and putrescine, two products of amino acid catabolism. It could also act on polyamines, like spermidine and spermine though less efficiently, and regulate various biological processes.</text>
</comment>
<comment type="catalytic activity">
    <reaction evidence="3">
        <text>histamine + O2 + H2O = imidazole-4-acetaldehyde + H2O2 + NH4(+)</text>
        <dbReference type="Rhea" id="RHEA:25625"/>
        <dbReference type="ChEBI" id="CHEBI:15377"/>
        <dbReference type="ChEBI" id="CHEBI:15379"/>
        <dbReference type="ChEBI" id="CHEBI:16240"/>
        <dbReference type="ChEBI" id="CHEBI:27398"/>
        <dbReference type="ChEBI" id="CHEBI:28938"/>
        <dbReference type="ChEBI" id="CHEBI:58432"/>
        <dbReference type="EC" id="1.4.3.22"/>
    </reaction>
    <physiologicalReaction direction="left-to-right" evidence="3">
        <dbReference type="Rhea" id="RHEA:25626"/>
    </physiologicalReaction>
</comment>
<comment type="catalytic activity">
    <reaction evidence="3">
        <text>N(tau)-methylhistamine + O2 + H2O = 1-methylimidazole-4-acetaldehyde + H2O2 + NH4(+)</text>
        <dbReference type="Rhea" id="RHEA:78367"/>
        <dbReference type="ChEBI" id="CHEBI:15377"/>
        <dbReference type="ChEBI" id="CHEBI:15379"/>
        <dbReference type="ChEBI" id="CHEBI:16240"/>
        <dbReference type="ChEBI" id="CHEBI:28104"/>
        <dbReference type="ChEBI" id="CHEBI:28938"/>
        <dbReference type="ChEBI" id="CHEBI:58600"/>
    </reaction>
    <physiologicalReaction direction="left-to-right" evidence="3">
        <dbReference type="Rhea" id="RHEA:78368"/>
    </physiologicalReaction>
</comment>
<comment type="catalytic activity">
    <reaction evidence="3">
        <text>putrescine + O2 + H2O = 4-aminobutanal + H2O2 + NH4(+)</text>
        <dbReference type="Rhea" id="RHEA:18273"/>
        <dbReference type="ChEBI" id="CHEBI:15377"/>
        <dbReference type="ChEBI" id="CHEBI:15379"/>
        <dbReference type="ChEBI" id="CHEBI:16240"/>
        <dbReference type="ChEBI" id="CHEBI:28938"/>
        <dbReference type="ChEBI" id="CHEBI:58264"/>
        <dbReference type="ChEBI" id="CHEBI:326268"/>
    </reaction>
    <physiologicalReaction direction="left-to-right" evidence="3">
        <dbReference type="Rhea" id="RHEA:18274"/>
    </physiologicalReaction>
</comment>
<comment type="catalytic activity">
    <reaction evidence="3">
        <text>cadaverine + O2 + H2O = 5-aminopentanal + H2O2 + NH4(+)</text>
        <dbReference type="Rhea" id="RHEA:69132"/>
        <dbReference type="ChEBI" id="CHEBI:15377"/>
        <dbReference type="ChEBI" id="CHEBI:15379"/>
        <dbReference type="ChEBI" id="CHEBI:16240"/>
        <dbReference type="ChEBI" id="CHEBI:28938"/>
        <dbReference type="ChEBI" id="CHEBI:58384"/>
        <dbReference type="ChEBI" id="CHEBI:144896"/>
    </reaction>
    <physiologicalReaction direction="left-to-right" evidence="3">
        <dbReference type="Rhea" id="RHEA:69133"/>
    </physiologicalReaction>
</comment>
<comment type="cofactor">
    <cofactor evidence="3">
        <name>Cu(2+)</name>
        <dbReference type="ChEBI" id="CHEBI:29036"/>
    </cofactor>
    <text evidence="3">Binds 1 copper ion per subunit.</text>
</comment>
<comment type="cofactor">
    <cofactor evidence="3">
        <name>Ca(2+)</name>
        <dbReference type="ChEBI" id="CHEBI:29108"/>
    </cofactor>
    <text evidence="3">Binds 2 calcium ions per subunit.</text>
</comment>
<comment type="cofactor">
    <cofactor evidence="3">
        <name>L-topaquinone</name>
        <dbReference type="ChEBI" id="CHEBI:79027"/>
    </cofactor>
    <text evidence="3">Contains 1 topaquinone per subunit.</text>
</comment>
<comment type="activity regulation">
    <text evidence="3">Inhibited by amiloride and amiloride analogs.</text>
</comment>
<comment type="subunit">
    <text evidence="3">Homodimer; disulfide-linked.</text>
</comment>
<comment type="subcellular location">
    <subcellularLocation>
        <location evidence="3">Secreted</location>
        <location evidence="3">Extracellular space</location>
    </subcellularLocation>
    <subcellularLocation>
        <location evidence="3">Cell membrane</location>
        <topology evidence="3">Peripheral membrane protein</topology>
        <orientation evidence="3">Extracellular side</orientation>
    </subcellularLocation>
</comment>
<comment type="PTM">
    <text evidence="2">Topaquinone (TPQ) is generated by copper-dependent autoxidation of a specific tyrosyl residue.</text>
</comment>
<comment type="PTM">
    <text evidence="3">N-glycosylated.</text>
</comment>
<comment type="similarity">
    <text evidence="6">Belongs to the copper/topaquinone oxidase family.</text>
</comment>
<gene>
    <name evidence="7" type="primary">Aoc1</name>
    <name evidence="7" type="synonym">Abp1</name>
</gene>